<protein>
    <recommendedName>
        <fullName>Glutathione hydrolase proenzyme</fullName>
        <ecNumber>3.4.19.13</ecNumber>
    </recommendedName>
    <alternativeName>
        <fullName>Gamma-glutamyltranspeptidase proenzyme</fullName>
        <ecNumber evidence="4">2.3.2.2</ecNumber>
    </alternativeName>
    <component>
        <recommendedName>
            <fullName>Glutathione hydrolase large chain</fullName>
        </recommendedName>
    </component>
    <component>
        <recommendedName>
            <fullName>Glutathione hydrolase small chain</fullName>
        </recommendedName>
    </component>
</protein>
<name>GGT_BACSU</name>
<sequence length="587" mass="64189">MKRTWNVCLTALLSVLLVAGSVPFHAEAKKPPKSYDEYKQVDVGKDGMVATAHPLASEIGADVLKKGGNAIDAAVAIQFALNVTEPMMSGIGGGGFMMVYDGKTKDTTIIDSRERAPAGATPDMFLDENGKAIPFSERVTKGTAVGVPGTLKGLEEALDKWGTRSMKQLITPSIKLAEKGFPIDSVLAEAISDYQEKLSRTAAKDVFLPNGEPLKEGDTLIQKDLAKTFKLIRSKGTDAFYKGKFAKTLSDTVQDFGGSMTEKDLENYDITIDEPIWGDYQGYQIATTPPPSSGGIFLLQMLKILDHFNLSQYDVRSWEKYQLLAETMHLSYADRASYAGDPEFVNVPLKGLLHPDYIKERQQLINLDQVNKKPKAGDPWKYQEGSANYKQVEQPKDKVEGQTTHFTVADRWGNVVSYTTTIEQLFGTGIMVPDYGVILNNELTDFDAIPGGANEVQPNKRPLSSMTPTILFKDDKPVLTVGSPGGATIISSVLQTILYHIEYGMELKAAVEEPRIYTNSMSSYRYEDGVPKDVLSKLNGMGHKFGTSPVDIGNVQSISIDHENGTFKGVADSSRNGAAIGINLKRK</sequence>
<dbReference type="EC" id="3.4.19.13"/>
<dbReference type="EC" id="2.3.2.2" evidence="4"/>
<dbReference type="EMBL" id="U49358">
    <property type="protein sequence ID" value="AAC44233.1"/>
    <property type="molecule type" value="Genomic_DNA"/>
</dbReference>
<dbReference type="EMBL" id="AL009126">
    <property type="protein sequence ID" value="CAB13724.1"/>
    <property type="molecule type" value="Genomic_DNA"/>
</dbReference>
<dbReference type="PIR" id="F69631">
    <property type="entry name" value="F69631"/>
</dbReference>
<dbReference type="RefSeq" id="NP_389723.1">
    <property type="nucleotide sequence ID" value="NC_000964.3"/>
</dbReference>
<dbReference type="RefSeq" id="WP_003231470.1">
    <property type="nucleotide sequence ID" value="NZ_OZ025638.1"/>
</dbReference>
<dbReference type="PDB" id="2V36">
    <property type="method" value="X-ray"/>
    <property type="resolution" value="1.85 A"/>
    <property type="chains" value="A/C=29-402, B/D=403-587"/>
</dbReference>
<dbReference type="PDB" id="3A75">
    <property type="method" value="X-ray"/>
    <property type="resolution" value="1.95 A"/>
    <property type="chains" value="A/C=36-402, B/D=403-587"/>
</dbReference>
<dbReference type="PDB" id="3WHQ">
    <property type="method" value="X-ray"/>
    <property type="resolution" value="1.85 A"/>
    <property type="chains" value="A=1-402, B=403-587"/>
</dbReference>
<dbReference type="PDB" id="3WHR">
    <property type="method" value="X-ray"/>
    <property type="resolution" value="1.58 A"/>
    <property type="chains" value="A=1-402, B=403-587"/>
</dbReference>
<dbReference type="PDB" id="3WHS">
    <property type="method" value="X-ray"/>
    <property type="resolution" value="1.80 A"/>
    <property type="chains" value="A=1-402, B=403-587"/>
</dbReference>
<dbReference type="PDBsum" id="2V36"/>
<dbReference type="PDBsum" id="3A75"/>
<dbReference type="PDBsum" id="3WHQ"/>
<dbReference type="PDBsum" id="3WHR"/>
<dbReference type="PDBsum" id="3WHS"/>
<dbReference type="SMR" id="P54422"/>
<dbReference type="FunCoup" id="P54422">
    <property type="interactions" value="381"/>
</dbReference>
<dbReference type="MINT" id="P54422"/>
<dbReference type="STRING" id="224308.BSU18410"/>
<dbReference type="MEROPS" id="T03.001"/>
<dbReference type="PaxDb" id="224308-BSU18410"/>
<dbReference type="EnsemblBacteria" id="CAB13724">
    <property type="protein sequence ID" value="CAB13724"/>
    <property type="gene ID" value="BSU_18410"/>
</dbReference>
<dbReference type="GeneID" id="940001"/>
<dbReference type="KEGG" id="bsu:BSU18410"/>
<dbReference type="PATRIC" id="fig|224308.179.peg.2008"/>
<dbReference type="eggNOG" id="COG0405">
    <property type="taxonomic scope" value="Bacteria"/>
</dbReference>
<dbReference type="InParanoid" id="P54422"/>
<dbReference type="OrthoDB" id="9781342at2"/>
<dbReference type="PhylomeDB" id="P54422"/>
<dbReference type="BioCyc" id="BSUB:BSU18410-MONOMER"/>
<dbReference type="BRENDA" id="2.3.2.2">
    <property type="organism ID" value="658"/>
</dbReference>
<dbReference type="BRENDA" id="3.4.19.13">
    <property type="organism ID" value="658"/>
</dbReference>
<dbReference type="UniPathway" id="UPA00204"/>
<dbReference type="EvolutionaryTrace" id="P54422"/>
<dbReference type="Proteomes" id="UP000001570">
    <property type="component" value="Chromosome"/>
</dbReference>
<dbReference type="GO" id="GO:0005576">
    <property type="term" value="C:extracellular region"/>
    <property type="evidence" value="ECO:0007669"/>
    <property type="project" value="UniProtKB-SubCell"/>
</dbReference>
<dbReference type="GO" id="GO:0036374">
    <property type="term" value="F:glutathione hydrolase activity"/>
    <property type="evidence" value="ECO:0007669"/>
    <property type="project" value="UniProtKB-EC"/>
</dbReference>
<dbReference type="GO" id="GO:0103068">
    <property type="term" value="F:leukotriene C4 gamma-glutamyl transferase activity"/>
    <property type="evidence" value="ECO:0007669"/>
    <property type="project" value="UniProtKB-EC"/>
</dbReference>
<dbReference type="GO" id="GO:0006750">
    <property type="term" value="P:glutathione biosynthetic process"/>
    <property type="evidence" value="ECO:0007669"/>
    <property type="project" value="UniProtKB-KW"/>
</dbReference>
<dbReference type="GO" id="GO:0006751">
    <property type="term" value="P:glutathione catabolic process"/>
    <property type="evidence" value="ECO:0007669"/>
    <property type="project" value="InterPro"/>
</dbReference>
<dbReference type="GO" id="GO:0006508">
    <property type="term" value="P:proteolysis"/>
    <property type="evidence" value="ECO:0007669"/>
    <property type="project" value="UniProtKB-KW"/>
</dbReference>
<dbReference type="Gene3D" id="1.10.246.130">
    <property type="match status" value="1"/>
</dbReference>
<dbReference type="Gene3D" id="3.60.20.40">
    <property type="match status" value="1"/>
</dbReference>
<dbReference type="InterPro" id="IPR051792">
    <property type="entry name" value="GGT_bact"/>
</dbReference>
<dbReference type="InterPro" id="IPR055262">
    <property type="entry name" value="GGT_CS"/>
</dbReference>
<dbReference type="InterPro" id="IPR043138">
    <property type="entry name" value="GGT_lsub_C"/>
</dbReference>
<dbReference type="InterPro" id="IPR000101">
    <property type="entry name" value="GGT_peptidase"/>
</dbReference>
<dbReference type="InterPro" id="IPR043137">
    <property type="entry name" value="GGT_ssub"/>
</dbReference>
<dbReference type="InterPro" id="IPR029055">
    <property type="entry name" value="Ntn_hydrolases_N"/>
</dbReference>
<dbReference type="NCBIfam" id="TIGR00066">
    <property type="entry name" value="g_glut_trans"/>
    <property type="match status" value="1"/>
</dbReference>
<dbReference type="PANTHER" id="PTHR43199">
    <property type="entry name" value="GLUTATHIONE HYDROLASE"/>
    <property type="match status" value="1"/>
</dbReference>
<dbReference type="PANTHER" id="PTHR43199:SF1">
    <property type="entry name" value="GLUTATHIONE HYDROLASE PROENZYME"/>
    <property type="match status" value="1"/>
</dbReference>
<dbReference type="Pfam" id="PF01019">
    <property type="entry name" value="G_glu_transpept"/>
    <property type="match status" value="1"/>
</dbReference>
<dbReference type="PRINTS" id="PR01210">
    <property type="entry name" value="GGTRANSPTASE"/>
</dbReference>
<dbReference type="SUPFAM" id="SSF56235">
    <property type="entry name" value="N-terminal nucleophile aminohydrolases (Ntn hydrolases)"/>
    <property type="match status" value="1"/>
</dbReference>
<dbReference type="PROSITE" id="PS00462">
    <property type="entry name" value="G_GLU_TRANSPEPTIDASE"/>
    <property type="match status" value="1"/>
</dbReference>
<comment type="function">
    <text>Cleaves the gamma-glutamyl bond of extracellular glutathione (gamma-Glu-Cys-Gly), glutathione conjugates, and other gamma-glutamyl compounds. The metabolism of glutathione releases free glutamate and the dipeptide cysteinyl-glycine, which is hydrolyzed to cysteine and glycine by dipeptidases.</text>
</comment>
<comment type="catalytic activity">
    <reaction evidence="4">
        <text>an N-terminal (5-L-glutamyl)-[peptide] + an alpha-amino acid = 5-L-glutamyl amino acid + an N-terminal L-alpha-aminoacyl-[peptide]</text>
        <dbReference type="Rhea" id="RHEA:23904"/>
        <dbReference type="Rhea" id="RHEA-COMP:9780"/>
        <dbReference type="Rhea" id="RHEA-COMP:9795"/>
        <dbReference type="ChEBI" id="CHEBI:77644"/>
        <dbReference type="ChEBI" id="CHEBI:78597"/>
        <dbReference type="ChEBI" id="CHEBI:78599"/>
        <dbReference type="ChEBI" id="CHEBI:78608"/>
        <dbReference type="EC" id="2.3.2.2"/>
    </reaction>
</comment>
<comment type="catalytic activity">
    <reaction>
        <text>glutathione + H2O = L-cysteinylglycine + L-glutamate</text>
        <dbReference type="Rhea" id="RHEA:28807"/>
        <dbReference type="ChEBI" id="CHEBI:15377"/>
        <dbReference type="ChEBI" id="CHEBI:29985"/>
        <dbReference type="ChEBI" id="CHEBI:57925"/>
        <dbReference type="ChEBI" id="CHEBI:61694"/>
        <dbReference type="EC" id="3.4.19.13"/>
    </reaction>
</comment>
<comment type="catalytic activity">
    <reaction>
        <text>an S-substituted glutathione + H2O = an S-substituted L-cysteinylglycine + L-glutamate</text>
        <dbReference type="Rhea" id="RHEA:59468"/>
        <dbReference type="ChEBI" id="CHEBI:15377"/>
        <dbReference type="ChEBI" id="CHEBI:29985"/>
        <dbReference type="ChEBI" id="CHEBI:90779"/>
        <dbReference type="ChEBI" id="CHEBI:143103"/>
        <dbReference type="EC" id="3.4.19.13"/>
    </reaction>
</comment>
<comment type="pathway">
    <text>Sulfur metabolism; glutathione metabolism.</text>
</comment>
<comment type="subunit">
    <text evidence="4">This enzyme consists of two polypeptide chains, which are synthesized in precursor form from a single polypeptide.</text>
</comment>
<comment type="subcellular location">
    <subcellularLocation>
        <location evidence="5">Secreted</location>
    </subcellularLocation>
</comment>
<comment type="developmental stage">
    <text evidence="5">Expressed at the end of vegetative growth.</text>
</comment>
<comment type="PTM">
    <text evidence="4">Cleaved by autocatalysis into a large and a small subunit.</text>
</comment>
<comment type="disruption phenotype">
    <text evidence="3">Loss of ability to grow with glutathione as a sulfur source.</text>
</comment>
<comment type="similarity">
    <text evidence="6">Belongs to the gamma-glutamyltransferase family.</text>
</comment>
<keyword id="KW-0002">3D-structure</keyword>
<keyword id="KW-0012">Acyltransferase</keyword>
<keyword id="KW-0317">Glutathione biosynthesis</keyword>
<keyword id="KW-0378">Hydrolase</keyword>
<keyword id="KW-0645">Protease</keyword>
<keyword id="KW-1185">Reference proteome</keyword>
<keyword id="KW-0964">Secreted</keyword>
<keyword id="KW-0732">Signal</keyword>
<keyword id="KW-0808">Transferase</keyword>
<keyword id="KW-0865">Zymogen</keyword>
<evidence type="ECO:0000250" key="1"/>
<evidence type="ECO:0000255" key="2"/>
<evidence type="ECO:0000269" key="3">
    <source>
    </source>
</evidence>
<evidence type="ECO:0000269" key="4">
    <source>
    </source>
</evidence>
<evidence type="ECO:0000269" key="5">
    <source>
    </source>
</evidence>
<evidence type="ECO:0000305" key="6"/>
<evidence type="ECO:0000305" key="7">
    <source>
    </source>
</evidence>
<evidence type="ECO:0007744" key="8">
    <source>
        <dbReference type="PDB" id="3A75"/>
    </source>
</evidence>
<evidence type="ECO:0007829" key="9">
    <source>
        <dbReference type="PDB" id="2V36"/>
    </source>
</evidence>
<evidence type="ECO:0007829" key="10">
    <source>
        <dbReference type="PDB" id="3WHR"/>
    </source>
</evidence>
<proteinExistence type="evidence at protein level"/>
<reference key="1">
    <citation type="journal article" date="1996" name="J. Bacteriol.">
        <title>Identification, sequence, and expression of the gene encoding gamma-glutamyltranspeptidase in Bacillus subtilis.</title>
        <authorList>
            <person name="Xu K."/>
            <person name="Strauch M.A."/>
        </authorList>
    </citation>
    <scope>NUCLEOTIDE SEQUENCE [GENOMIC DNA]</scope>
    <scope>SUBCELLULAR LOCATION</scope>
    <scope>DEVELOPMENTAL STAGE</scope>
    <source>
        <strain>168 / JH642</strain>
    </source>
</reference>
<reference key="2">
    <citation type="journal article" date="1997" name="Nature">
        <title>The complete genome sequence of the Gram-positive bacterium Bacillus subtilis.</title>
        <authorList>
            <person name="Kunst F."/>
            <person name="Ogasawara N."/>
            <person name="Moszer I."/>
            <person name="Albertini A.M."/>
            <person name="Alloni G."/>
            <person name="Azevedo V."/>
            <person name="Bertero M.G."/>
            <person name="Bessieres P."/>
            <person name="Bolotin A."/>
            <person name="Borchert S."/>
            <person name="Borriss R."/>
            <person name="Boursier L."/>
            <person name="Brans A."/>
            <person name="Braun M."/>
            <person name="Brignell S.C."/>
            <person name="Bron S."/>
            <person name="Brouillet S."/>
            <person name="Bruschi C.V."/>
            <person name="Caldwell B."/>
            <person name="Capuano V."/>
            <person name="Carter N.M."/>
            <person name="Choi S.-K."/>
            <person name="Codani J.-J."/>
            <person name="Connerton I.F."/>
            <person name="Cummings N.J."/>
            <person name="Daniel R.A."/>
            <person name="Denizot F."/>
            <person name="Devine K.M."/>
            <person name="Duesterhoeft A."/>
            <person name="Ehrlich S.D."/>
            <person name="Emmerson P.T."/>
            <person name="Entian K.-D."/>
            <person name="Errington J."/>
            <person name="Fabret C."/>
            <person name="Ferrari E."/>
            <person name="Foulger D."/>
            <person name="Fritz C."/>
            <person name="Fujita M."/>
            <person name="Fujita Y."/>
            <person name="Fuma S."/>
            <person name="Galizzi A."/>
            <person name="Galleron N."/>
            <person name="Ghim S.-Y."/>
            <person name="Glaser P."/>
            <person name="Goffeau A."/>
            <person name="Golightly E.J."/>
            <person name="Grandi G."/>
            <person name="Guiseppi G."/>
            <person name="Guy B.J."/>
            <person name="Haga K."/>
            <person name="Haiech J."/>
            <person name="Harwood C.R."/>
            <person name="Henaut A."/>
            <person name="Hilbert H."/>
            <person name="Holsappel S."/>
            <person name="Hosono S."/>
            <person name="Hullo M.-F."/>
            <person name="Itaya M."/>
            <person name="Jones L.-M."/>
            <person name="Joris B."/>
            <person name="Karamata D."/>
            <person name="Kasahara Y."/>
            <person name="Klaerr-Blanchard M."/>
            <person name="Klein C."/>
            <person name="Kobayashi Y."/>
            <person name="Koetter P."/>
            <person name="Koningstein G."/>
            <person name="Krogh S."/>
            <person name="Kumano M."/>
            <person name="Kurita K."/>
            <person name="Lapidus A."/>
            <person name="Lardinois S."/>
            <person name="Lauber J."/>
            <person name="Lazarevic V."/>
            <person name="Lee S.-M."/>
            <person name="Levine A."/>
            <person name="Liu H."/>
            <person name="Masuda S."/>
            <person name="Mauel C."/>
            <person name="Medigue C."/>
            <person name="Medina N."/>
            <person name="Mellado R.P."/>
            <person name="Mizuno M."/>
            <person name="Moestl D."/>
            <person name="Nakai S."/>
            <person name="Noback M."/>
            <person name="Noone D."/>
            <person name="O'Reilly M."/>
            <person name="Ogawa K."/>
            <person name="Ogiwara A."/>
            <person name="Oudega B."/>
            <person name="Park S.-H."/>
            <person name="Parro V."/>
            <person name="Pohl T.M."/>
            <person name="Portetelle D."/>
            <person name="Porwollik S."/>
            <person name="Prescott A.M."/>
            <person name="Presecan E."/>
            <person name="Pujic P."/>
            <person name="Purnelle B."/>
            <person name="Rapoport G."/>
            <person name="Rey M."/>
            <person name="Reynolds S."/>
            <person name="Rieger M."/>
            <person name="Rivolta C."/>
            <person name="Rocha E."/>
            <person name="Roche B."/>
            <person name="Rose M."/>
            <person name="Sadaie Y."/>
            <person name="Sato T."/>
            <person name="Scanlan E."/>
            <person name="Schleich S."/>
            <person name="Schroeter R."/>
            <person name="Scoffone F."/>
            <person name="Sekiguchi J."/>
            <person name="Sekowska A."/>
            <person name="Seror S.J."/>
            <person name="Serror P."/>
            <person name="Shin B.-S."/>
            <person name="Soldo B."/>
            <person name="Sorokin A."/>
            <person name="Tacconi E."/>
            <person name="Takagi T."/>
            <person name="Takahashi H."/>
            <person name="Takemaru K."/>
            <person name="Takeuchi M."/>
            <person name="Tamakoshi A."/>
            <person name="Tanaka T."/>
            <person name="Terpstra P."/>
            <person name="Tognoni A."/>
            <person name="Tosato V."/>
            <person name="Uchiyama S."/>
            <person name="Vandenbol M."/>
            <person name="Vannier F."/>
            <person name="Vassarotti A."/>
            <person name="Viari A."/>
            <person name="Wambutt R."/>
            <person name="Wedler E."/>
            <person name="Wedler H."/>
            <person name="Weitzenegger T."/>
            <person name="Winters P."/>
            <person name="Wipat A."/>
            <person name="Yamamoto H."/>
            <person name="Yamane K."/>
            <person name="Yasumoto K."/>
            <person name="Yata K."/>
            <person name="Yoshida K."/>
            <person name="Yoshikawa H.-F."/>
            <person name="Zumstein E."/>
            <person name="Yoshikawa H."/>
            <person name="Danchin A."/>
        </authorList>
    </citation>
    <scope>NUCLEOTIDE SEQUENCE [LARGE SCALE GENOMIC DNA]</scope>
    <source>
        <strain>168</strain>
    </source>
</reference>
<reference key="3">
    <citation type="journal article" date="2004" name="J. Bacteriol.">
        <title>Gamma-glutamyltranspeptidase, but not YwrD, is important in utilization of extracellular glutathione as a sulfur source in Bacillus subtilis.</title>
        <authorList>
            <person name="Minami H."/>
            <person name="Suzuki H."/>
            <person name="Kumagai H."/>
        </authorList>
    </citation>
    <scope>DISRUPTION PHENOTYPE</scope>
    <source>
        <strain>168 / Marburg / ATCC 6051 / DSM 10 / JCM 1465 / NBRC 13719 / NCIMB 3610 / NRRL NRS-744 / VKM B-501</strain>
    </source>
</reference>
<reference key="4">
    <citation type="journal article" date="2010" name="FEBS J.">
        <title>Crystal structure of the halotolerant gamma-glutamyltranspeptidase from Bacillus subtilis in complex with glutamate reveals a unique architecture of the solvent-exposed catalytic pocket.</title>
        <authorList>
            <person name="Wada K."/>
            <person name="Irie M."/>
            <person name="Suzuki H."/>
            <person name="Fukuyama K."/>
        </authorList>
    </citation>
    <scope>X-RAY CRYSTALLOGRAPHY (1.95 ANGSTROMS) OF 36-587 IN COMPLEX WITH GLUTAMATE</scope>
    <scope>CATALYTIC ACTIVITY</scope>
    <scope>SUBUNIT</scope>
    <scope>AUTOCATALYTIC CLEAVAGE</scope>
</reference>
<gene>
    <name type="primary">ggt</name>
    <name type="ordered locus">BSU18410</name>
</gene>
<feature type="signal peptide" evidence="2">
    <location>
        <begin position="1"/>
        <end position="28"/>
    </location>
</feature>
<feature type="propeptide" id="PRO_0000011049" evidence="2">
    <location>
        <begin position="29"/>
        <end position="35"/>
    </location>
</feature>
<feature type="chain" id="PRO_0000011050" description="Glutathione hydrolase large chain">
    <location>
        <begin position="36"/>
        <end position="402"/>
    </location>
</feature>
<feature type="chain" id="PRO_0000011051" description="Glutathione hydrolase small chain">
    <location>
        <begin position="403"/>
        <end position="587"/>
    </location>
</feature>
<feature type="active site" description="Nucleophile" evidence="7">
    <location>
        <position position="403"/>
    </location>
</feature>
<feature type="binding site" evidence="4">
    <location>
        <position position="113"/>
    </location>
    <ligand>
        <name>L-glutamate</name>
        <dbReference type="ChEBI" id="CHEBI:29985"/>
    </ligand>
</feature>
<feature type="binding site" evidence="1">
    <location>
        <position position="421"/>
    </location>
    <ligand>
        <name>L-glutamate</name>
        <dbReference type="ChEBI" id="CHEBI:29985"/>
    </ligand>
</feature>
<feature type="binding site" evidence="4">
    <location>
        <position position="423"/>
    </location>
    <ligand>
        <name>L-glutamate</name>
        <dbReference type="ChEBI" id="CHEBI:29985"/>
    </ligand>
</feature>
<feature type="binding site" evidence="4">
    <location>
        <position position="442"/>
    </location>
    <ligand>
        <name>L-glutamate</name>
        <dbReference type="ChEBI" id="CHEBI:29985"/>
    </ligand>
</feature>
<feature type="binding site" evidence="4">
    <location>
        <position position="445"/>
    </location>
    <ligand>
        <name>L-glutamate</name>
        <dbReference type="ChEBI" id="CHEBI:29985"/>
    </ligand>
</feature>
<feature type="binding site" evidence="4 8">
    <location>
        <begin position="464"/>
        <end position="465"/>
    </location>
    <ligand>
        <name>L-glutamate</name>
        <dbReference type="ChEBI" id="CHEBI:29985"/>
    </ligand>
</feature>
<feature type="binding site" evidence="4 8">
    <location>
        <begin position="485"/>
        <end position="486"/>
    </location>
    <ligand>
        <name>L-glutamate</name>
        <dbReference type="ChEBI" id="CHEBI:29985"/>
    </ligand>
</feature>
<feature type="helix" evidence="9">
    <location>
        <begin position="35"/>
        <end position="37"/>
    </location>
</feature>
<feature type="strand" evidence="10">
    <location>
        <begin position="39"/>
        <end position="53"/>
    </location>
</feature>
<feature type="helix" evidence="10">
    <location>
        <begin position="54"/>
        <end position="65"/>
    </location>
</feature>
<feature type="helix" evidence="10">
    <location>
        <begin position="70"/>
        <end position="84"/>
    </location>
</feature>
<feature type="turn" evidence="10">
    <location>
        <begin position="86"/>
        <end position="88"/>
    </location>
</feature>
<feature type="strand" evidence="10">
    <location>
        <begin position="93"/>
        <end position="100"/>
    </location>
</feature>
<feature type="turn" evidence="10">
    <location>
        <begin position="102"/>
        <end position="104"/>
    </location>
</feature>
<feature type="strand" evidence="10">
    <location>
        <begin position="107"/>
        <end position="111"/>
    </location>
</feature>
<feature type="turn" evidence="10">
    <location>
        <begin position="122"/>
        <end position="125"/>
    </location>
</feature>
<feature type="strand" evidence="9">
    <location>
        <begin position="128"/>
        <end position="130"/>
    </location>
</feature>
<feature type="helix" evidence="10">
    <location>
        <begin position="135"/>
        <end position="138"/>
    </location>
</feature>
<feature type="helix" evidence="10">
    <location>
        <begin position="142"/>
        <end position="144"/>
    </location>
</feature>
<feature type="helix" evidence="10">
    <location>
        <begin position="150"/>
        <end position="161"/>
    </location>
</feature>
<feature type="helix" evidence="10">
    <location>
        <begin position="166"/>
        <end position="179"/>
    </location>
</feature>
<feature type="helix" evidence="10">
    <location>
        <begin position="185"/>
        <end position="193"/>
    </location>
</feature>
<feature type="helix" evidence="10">
    <location>
        <begin position="195"/>
        <end position="199"/>
    </location>
</feature>
<feature type="helix" evidence="10">
    <location>
        <begin position="204"/>
        <end position="207"/>
    </location>
</feature>
<feature type="helix" evidence="10">
    <location>
        <begin position="209"/>
        <end position="211"/>
    </location>
</feature>
<feature type="helix" evidence="10">
    <location>
        <begin position="223"/>
        <end position="235"/>
    </location>
</feature>
<feature type="helix" evidence="10">
    <location>
        <begin position="238"/>
        <end position="241"/>
    </location>
</feature>
<feature type="helix" evidence="10">
    <location>
        <begin position="243"/>
        <end position="255"/>
    </location>
</feature>
<feature type="helix" evidence="10">
    <location>
        <begin position="262"/>
        <end position="267"/>
    </location>
</feature>
<feature type="strand" evidence="10">
    <location>
        <begin position="271"/>
        <end position="273"/>
    </location>
</feature>
<feature type="strand" evidence="10">
    <location>
        <begin position="276"/>
        <end position="280"/>
    </location>
</feature>
<feature type="strand" evidence="10">
    <location>
        <begin position="283"/>
        <end position="287"/>
    </location>
</feature>
<feature type="helix" evidence="10">
    <location>
        <begin position="294"/>
        <end position="306"/>
    </location>
</feature>
<feature type="helix" evidence="10">
    <location>
        <begin position="310"/>
        <end position="312"/>
    </location>
</feature>
<feature type="helix" evidence="10">
    <location>
        <begin position="318"/>
        <end position="338"/>
    </location>
</feature>
<feature type="turn" evidence="10">
    <location>
        <begin position="342"/>
        <end position="344"/>
    </location>
</feature>
<feature type="helix" evidence="10">
    <location>
        <begin position="349"/>
        <end position="352"/>
    </location>
</feature>
<feature type="helix" evidence="10">
    <location>
        <begin position="355"/>
        <end position="362"/>
    </location>
</feature>
<feature type="strand" evidence="10">
    <location>
        <begin position="367"/>
        <end position="369"/>
    </location>
</feature>
<feature type="helix" evidence="10">
    <location>
        <begin position="379"/>
        <end position="382"/>
    </location>
</feature>
<feature type="strand" evidence="10">
    <location>
        <begin position="383"/>
        <end position="385"/>
    </location>
</feature>
<feature type="strand" evidence="10">
    <location>
        <begin position="404"/>
        <end position="410"/>
    </location>
</feature>
<feature type="strand" evidence="10">
    <location>
        <begin position="415"/>
        <end position="421"/>
    </location>
</feature>
<feature type="turn" evidence="10">
    <location>
        <begin position="425"/>
        <end position="428"/>
    </location>
</feature>
<feature type="turn" evidence="10">
    <location>
        <begin position="433"/>
        <end position="435"/>
    </location>
</feature>
<feature type="helix" evidence="10">
    <location>
        <begin position="442"/>
        <end position="445"/>
    </location>
</feature>
<feature type="strand" evidence="10">
    <location>
        <begin position="446"/>
        <end position="449"/>
    </location>
</feature>
<feature type="strand" evidence="10">
    <location>
        <begin position="469"/>
        <end position="473"/>
    </location>
</feature>
<feature type="strand" evidence="10">
    <location>
        <begin position="476"/>
        <end position="481"/>
    </location>
</feature>
<feature type="helix" evidence="10">
    <location>
        <begin position="488"/>
        <end position="501"/>
    </location>
</feature>
<feature type="helix" evidence="10">
    <location>
        <begin position="507"/>
        <end position="512"/>
    </location>
</feature>
<feature type="strand" evidence="10">
    <location>
        <begin position="516"/>
        <end position="520"/>
    </location>
</feature>
<feature type="strand" evidence="10">
    <location>
        <begin position="523"/>
        <end position="526"/>
    </location>
</feature>
<feature type="helix" evidence="10">
    <location>
        <begin position="532"/>
        <end position="540"/>
    </location>
</feature>
<feature type="strand" evidence="10">
    <location>
        <begin position="557"/>
        <end position="561"/>
    </location>
</feature>
<feature type="turn" evidence="10">
    <location>
        <begin position="562"/>
        <end position="565"/>
    </location>
</feature>
<feature type="strand" evidence="10">
    <location>
        <begin position="566"/>
        <end position="570"/>
    </location>
</feature>
<feature type="turn" evidence="10">
    <location>
        <begin position="573"/>
        <end position="576"/>
    </location>
</feature>
<feature type="strand" evidence="10">
    <location>
        <begin position="578"/>
        <end position="581"/>
    </location>
</feature>
<organism>
    <name type="scientific">Bacillus subtilis (strain 168)</name>
    <dbReference type="NCBI Taxonomy" id="224308"/>
    <lineage>
        <taxon>Bacteria</taxon>
        <taxon>Bacillati</taxon>
        <taxon>Bacillota</taxon>
        <taxon>Bacilli</taxon>
        <taxon>Bacillales</taxon>
        <taxon>Bacillaceae</taxon>
        <taxon>Bacillus</taxon>
    </lineage>
</organism>
<accession>P54422</accession>